<gene>
    <name evidence="10" type="primary">Rab21</name>
</gene>
<sequence length="222" mass="24106">MAAAGGGAAAAAGRAYSFKVVLLGEGCVGKTSLVLRYCENKFNDKHITTLQASFLTKKLNIGGKRVNLAIWDTAGQERFHALGPIYYRDSNGAILVYDVTDEDSFQKVKNWVKELRKMLGNEICLCIVGNKIDLEKERHVSIQEAESYAESVGAKHYHTSAKQNKGIEELFLDLCKRMIETAQVDERAKGNGSSQAGAARRGVQIIDDEPQAQSSGGCCSSG</sequence>
<keyword id="KW-0007">Acetylation</keyword>
<keyword id="KW-0966">Cell projection</keyword>
<keyword id="KW-0968">Cytoplasmic vesicle</keyword>
<keyword id="KW-0903">Direct protein sequencing</keyword>
<keyword id="KW-0256">Endoplasmic reticulum</keyword>
<keyword id="KW-0967">Endosome</keyword>
<keyword id="KW-0333">Golgi apparatus</keyword>
<keyword id="KW-0342">GTP-binding</keyword>
<keyword id="KW-0378">Hydrolase</keyword>
<keyword id="KW-0449">Lipoprotein</keyword>
<keyword id="KW-0460">Magnesium</keyword>
<keyword id="KW-0472">Membrane</keyword>
<keyword id="KW-0479">Metal-binding</keyword>
<keyword id="KW-0488">Methylation</keyword>
<keyword id="KW-0547">Nucleotide-binding</keyword>
<keyword id="KW-0636">Prenylation</keyword>
<keyword id="KW-0653">Protein transport</keyword>
<keyword id="KW-1185">Reference proteome</keyword>
<keyword id="KW-0813">Transport</keyword>
<evidence type="ECO:0000250" key="1"/>
<evidence type="ECO:0000250" key="2">
    <source>
        <dbReference type="UniProtKB" id="P20339"/>
    </source>
</evidence>
<evidence type="ECO:0000250" key="3">
    <source>
        <dbReference type="UniProtKB" id="Q6AXT5"/>
    </source>
</evidence>
<evidence type="ECO:0000250" key="4">
    <source>
        <dbReference type="UniProtKB" id="Q9UL25"/>
    </source>
</evidence>
<evidence type="ECO:0000255" key="5"/>
<evidence type="ECO:0000269" key="6">
    <source>
    </source>
</evidence>
<evidence type="ECO:0000269" key="7">
    <source>
    </source>
</evidence>
<evidence type="ECO:0000269" key="8">
    <source>
    </source>
</evidence>
<evidence type="ECO:0000305" key="9"/>
<evidence type="ECO:0000312" key="10">
    <source>
        <dbReference type="MGI" id="MGI:894308"/>
    </source>
</evidence>
<accession>P35282</accession>
<accession>Q7TPN7</accession>
<name>RAB21_MOUSE</name>
<comment type="function">
    <text evidence="3 4 6 7">The small GTPases Rab are key regulators of intracellular membrane trafficking, from the formation of transport vesicles to their fusion with membranes. Rabs cycle between an inactive GDP-bound form and an active GTP-bound form that is able to recruit to membranes different sets of downstream effectors directly responsible for vesicle formation, movement, tethering and fusion (PubMed:16754960, PubMed:18804435). RAB21 is involved in membrane trafficking control (PubMed:16754960, PubMed:18804435). Regulates integrin internalization and recycling, but does not influence the traffic of endosomally translocated receptors in general (PubMed:16754960). As a result, may regulate cell adhesion and migration (PubMed:16754960). During the mitosis of adherent cells, controls the endosomal trafficking of integrins which is required for the successful completion of cytokinesis (PubMed:18804435). Involved in neurite growth (By similarity). Following SBF2/MTMT13-mediated activation in response to starvation-induced autophagy, binds to and regulates SNARE protein VAMP8 endolysosomal transport required for SNARE-mediated autophagosome-lysosome fusion (By similarity). Modulates protein levels of the cargo receptors TMED2 and TMED10, and required for appropriate Golgi localization of TMED10 (By similarity).</text>
</comment>
<comment type="catalytic activity">
    <reaction evidence="2">
        <text>GTP + H2O = GDP + phosphate + H(+)</text>
        <dbReference type="Rhea" id="RHEA:19669"/>
        <dbReference type="ChEBI" id="CHEBI:15377"/>
        <dbReference type="ChEBI" id="CHEBI:15378"/>
        <dbReference type="ChEBI" id="CHEBI:37565"/>
        <dbReference type="ChEBI" id="CHEBI:43474"/>
        <dbReference type="ChEBI" id="CHEBI:58189"/>
        <dbReference type="EC" id="3.6.5.2"/>
    </reaction>
    <physiologicalReaction direction="left-to-right" evidence="2">
        <dbReference type="Rhea" id="RHEA:19670"/>
    </physiologicalReaction>
</comment>
<comment type="cofactor">
    <cofactor evidence="4">
        <name>Mg(2+)</name>
        <dbReference type="ChEBI" id="CHEBI:18420"/>
    </cofactor>
</comment>
<comment type="activity regulation">
    <text evidence="4 9">Regulated by guanine nucleotide exchange factors (GEFs) including ANKRD27 and RABGEF1, which promote the exchange of bound GDP for free GTP (By similarity). Regulated by GTPase activating proteins (GAPs) which increase the GTP hydrolysis activity. Inhibited by GDP dissociation inhibitors (GDIs) (Probable).</text>
</comment>
<comment type="subunit">
    <text evidence="4 6">Interacts with the cytoplasmic tail of integrins ITGA1, ITGA2, ITGA5, ITGA6, ITGA11 and ITGB1; this interaction is dependent upon its GDP/GTP cycle (PubMed:16754960). Interacts with RABGEF1 (via VPS9 domain) (By similarity). Interacts with ANKRD27 (By similarity). Interacts with VAMP7 (By similarity). Interacts (in GTP-bound form) with VAMP8 in response to starvation; the interaction probably regulates VAMP8 endolysosomal trafficking (By similarity). Interacts (active GTP-bound form) with TMED10; the interaction is indirect and regulates TMED10 abundance and localization at the Golgi (By similarity).</text>
</comment>
<comment type="interaction">
    <interactant intactId="EBI-1993555">
        <id>P35282</id>
    </interactant>
    <interactant intactId="EBI-702960">
        <id>P17301</id>
        <label>ITGA2</label>
    </interactant>
    <organismsDiffer>true</organismsDiffer>
    <experiments>7</experiments>
</comment>
<comment type="interaction">
    <interactant intactId="EBI-1993555">
        <id>P35282</id>
    </interactant>
    <interactant intactId="EBI-703066">
        <id>P05556</id>
        <label>ITGB1</label>
    </interactant>
    <organismsDiffer>true</organismsDiffer>
    <experiments>3</experiments>
</comment>
<comment type="subcellular location">
    <subcellularLocation>
        <location evidence="6">Endoplasmic reticulum membrane</location>
        <topology evidence="9">Lipid-anchor</topology>
    </subcellularLocation>
    <subcellularLocation>
        <location evidence="8">Golgi apparatus</location>
        <location evidence="8">trans-Golgi network</location>
    </subcellularLocation>
    <subcellularLocation>
        <location evidence="6">Golgi apparatus membrane</location>
    </subcellularLocation>
    <subcellularLocation>
        <location evidence="6">Early endosome membrane</location>
    </subcellularLocation>
    <subcellularLocation>
        <location evidence="6">Cytoplasmic vesicle membrane</location>
    </subcellularLocation>
    <subcellularLocation>
        <location evidence="7">Cleavage furrow</location>
    </subcellularLocation>
    <subcellularLocation>
        <location evidence="8">Cell projection</location>
        <location evidence="8">Neuron projection</location>
    </subcellularLocation>
    <text evidence="7 8">Colocalizes with ANKRD27 and VAMP7 in neurites (PubMed:19745841). During mitosis, in mid-telophase, localized in the ingressing cleavage furrow (PubMed:18804435). In late telophase, detected at the opposite poles of the daughter cells, in vesicles at the base of lamellipodia formed by the separating daughter cells (PubMed:18804435).</text>
</comment>
<comment type="domain">
    <text evidence="4">Switch 1, switch 2 and the interswitch regions are characteristic of Rab GTPases and mediate the interactions with Rab downstream effectors. The switch regions undergo conformational changes upon nucleotide binding which drive interaction with specific sets of effector proteins, with most effectors only binding to GTP-bound Rab.</text>
</comment>
<comment type="similarity">
    <text evidence="9">Belongs to the small GTPase superfamily. Rab family.</text>
</comment>
<protein>
    <recommendedName>
        <fullName>Ras-related protein Rab-21</fullName>
        <ecNumber evidence="2">3.6.5.2</ecNumber>
    </recommendedName>
    <alternativeName>
        <fullName>Rab-12</fullName>
    </alternativeName>
</protein>
<proteinExistence type="evidence at protein level"/>
<reference key="1">
    <citation type="journal article" date="2004" name="Genome Res.">
        <title>The status, quality, and expansion of the NIH full-length cDNA project: the Mammalian Gene Collection (MGC).</title>
        <authorList>
            <consortium name="The MGC Project Team"/>
        </authorList>
    </citation>
    <scope>NUCLEOTIDE SEQUENCE [LARGE SCALE MRNA]</scope>
    <source>
        <tissue>Eye</tissue>
    </source>
</reference>
<reference key="2">
    <citation type="journal article" date="1992" name="Gene">
        <title>The complexity of the Rab and Rho GTP-binding protein subfamilies revealed by a PCR cloning approach.</title>
        <authorList>
            <person name="Chavrier P."/>
            <person name="Simons K."/>
            <person name="Zerial M."/>
        </authorList>
    </citation>
    <scope>NUCLEOTIDE SEQUENCE [MRNA] OF 29-77</scope>
    <source>
        <tissue>Kidney</tissue>
    </source>
</reference>
<reference key="3">
    <citation type="submission" date="2007-04" db="UniProtKB">
        <authorList>
            <person name="Lubec G."/>
            <person name="Kang S.U."/>
        </authorList>
    </citation>
    <scope>PROTEIN SEQUENCE OF 178-187</scope>
    <scope>IDENTIFICATION BY MASS SPECTROMETRY</scope>
    <source>
        <strain>C57BL/6J</strain>
        <tissue>Brain</tissue>
    </source>
</reference>
<reference key="4">
    <citation type="journal article" date="2006" name="J. Cell Biol.">
        <title>Small GTPase Rab21 regulates cell adhesion and controls endosomal traffic of beta1-integrins.</title>
        <authorList>
            <person name="Pellinen T."/>
            <person name="Arjonen A."/>
            <person name="Vuoriluoto K."/>
            <person name="Kallio K."/>
            <person name="Fransen J.A.M."/>
            <person name="Ivaska J."/>
        </authorList>
    </citation>
    <scope>FUNCTION</scope>
    <scope>INTERACTION WITH ITGA1; ITGA2; ITGA5; ITGA6; ITGA11 AND ITGB1</scope>
    <scope>MUTAGENESIS OF THR-31 AND GLN-76</scope>
    <scope>SUBCELLULAR LOCATION</scope>
</reference>
<reference key="5">
    <citation type="journal article" date="2008" name="Dev. Cell">
        <title>Integrin trafficking regulated by Rab21 is necessary for cytokinesis.</title>
        <authorList>
            <person name="Pellinen T."/>
            <person name="Tuomi S."/>
            <person name="Arjonen A."/>
            <person name="Wolf M."/>
            <person name="Edgren H."/>
            <person name="Meyer H."/>
            <person name="Grosse R."/>
            <person name="Kitzing T."/>
            <person name="Rantala J.K."/>
            <person name="Kallioniemi O."/>
            <person name="Faessler R."/>
            <person name="Kallio M."/>
            <person name="Ivaska J."/>
        </authorList>
    </citation>
    <scope>FUNCTION</scope>
    <scope>SUBCELLULAR LOCATION</scope>
</reference>
<reference key="6">
    <citation type="journal article" date="2009" name="EMBO Rep.">
        <title>Role of Varp, a Rab21 exchange factor and TI-VAMP/VAMP7 partner, in neurite growth.</title>
        <authorList>
            <person name="Burgo A."/>
            <person name="Sotirakis E."/>
            <person name="Simmler M.C."/>
            <person name="Verraes A."/>
            <person name="Chamot C."/>
            <person name="Simpson J.C."/>
            <person name="Lanzetti L."/>
            <person name="Proux-Gillardeaux V."/>
            <person name="Galli T."/>
        </authorList>
    </citation>
    <scope>SUBCELLULAR LOCATION</scope>
</reference>
<reference key="7">
    <citation type="journal article" date="2010" name="Cell">
        <title>A tissue-specific atlas of mouse protein phosphorylation and expression.</title>
        <authorList>
            <person name="Huttlin E.L."/>
            <person name="Jedrychowski M.P."/>
            <person name="Elias J.E."/>
            <person name="Goswami T."/>
            <person name="Rad R."/>
            <person name="Beausoleil S.A."/>
            <person name="Villen J."/>
            <person name="Haas W."/>
            <person name="Sowa M.E."/>
            <person name="Gygi S.P."/>
        </authorList>
    </citation>
    <scope>IDENTIFICATION BY MASS SPECTROMETRY [LARGE SCALE ANALYSIS]</scope>
    <source>
        <tissue>Brain</tissue>
        <tissue>Brown adipose tissue</tissue>
        <tissue>Heart</tissue>
        <tissue>Kidney</tissue>
        <tissue>Liver</tissue>
        <tissue>Lung</tissue>
        <tissue>Pancreas</tissue>
        <tissue>Spleen</tissue>
        <tissue>Testis</tissue>
    </source>
</reference>
<dbReference type="EC" id="3.6.5.2" evidence="2"/>
<dbReference type="EMBL" id="BC055042">
    <property type="protein sequence ID" value="AAH55042.1"/>
    <property type="molecule type" value="mRNA"/>
</dbReference>
<dbReference type="EMBL" id="M79302">
    <property type="protein sequence ID" value="AAK14826.1"/>
    <property type="molecule type" value="mRNA"/>
</dbReference>
<dbReference type="CCDS" id="CCDS24177.1"/>
<dbReference type="PIR" id="A38879">
    <property type="entry name" value="A38879"/>
</dbReference>
<dbReference type="RefSeq" id="NP_077774.1">
    <property type="nucleotide sequence ID" value="NM_024454.1"/>
</dbReference>
<dbReference type="SMR" id="P35282"/>
<dbReference type="BioGRID" id="229733">
    <property type="interactions" value="7"/>
</dbReference>
<dbReference type="FunCoup" id="P35282">
    <property type="interactions" value="2868"/>
</dbReference>
<dbReference type="IntAct" id="P35282">
    <property type="interactions" value="35"/>
</dbReference>
<dbReference type="MINT" id="P35282"/>
<dbReference type="STRING" id="10090.ENSMUSP00000020343"/>
<dbReference type="GlyGen" id="P35282">
    <property type="glycosylation" value="2 sites, 1 N-linked glycan (1 site), 1 O-linked glycan (1 site)"/>
</dbReference>
<dbReference type="iPTMnet" id="P35282"/>
<dbReference type="PhosphoSitePlus" id="P35282"/>
<dbReference type="SwissPalm" id="P35282"/>
<dbReference type="jPOST" id="P35282"/>
<dbReference type="PaxDb" id="10090-ENSMUSP00000020343"/>
<dbReference type="PeptideAtlas" id="P35282"/>
<dbReference type="ProteomicsDB" id="300341"/>
<dbReference type="Pumba" id="P35282"/>
<dbReference type="Antibodypedia" id="1484">
    <property type="antibodies" value="424 antibodies from 30 providers"/>
</dbReference>
<dbReference type="DNASU" id="216344"/>
<dbReference type="Ensembl" id="ENSMUST00000020343.9">
    <property type="protein sequence ID" value="ENSMUSP00000020343.8"/>
    <property type="gene ID" value="ENSMUSG00000020132.11"/>
</dbReference>
<dbReference type="GeneID" id="216344"/>
<dbReference type="KEGG" id="mmu:216344"/>
<dbReference type="UCSC" id="uc007haz.1">
    <property type="organism name" value="mouse"/>
</dbReference>
<dbReference type="AGR" id="MGI:894308"/>
<dbReference type="CTD" id="23011"/>
<dbReference type="MGI" id="MGI:894308">
    <property type="gene designation" value="Rab21"/>
</dbReference>
<dbReference type="VEuPathDB" id="HostDB:ENSMUSG00000020132"/>
<dbReference type="eggNOG" id="KOG0088">
    <property type="taxonomic scope" value="Eukaryota"/>
</dbReference>
<dbReference type="GeneTree" id="ENSGT00940000156786"/>
<dbReference type="HOGENOM" id="CLU_041217_10_2_1"/>
<dbReference type="InParanoid" id="P35282"/>
<dbReference type="OMA" id="NDEQHRN"/>
<dbReference type="OrthoDB" id="63533at2759"/>
<dbReference type="PhylomeDB" id="P35282"/>
<dbReference type="TreeFam" id="TF300199"/>
<dbReference type="Reactome" id="R-MMU-8873719">
    <property type="pathway name" value="RAB geranylgeranylation"/>
</dbReference>
<dbReference type="Reactome" id="R-MMU-8876198">
    <property type="pathway name" value="RAB GEFs exchange GTP for GDP on RABs"/>
</dbReference>
<dbReference type="BioGRID-ORCS" id="216344">
    <property type="hits" value="1 hit in 77 CRISPR screens"/>
</dbReference>
<dbReference type="CD-CODE" id="8F289D40">
    <property type="entry name" value="ELVA"/>
</dbReference>
<dbReference type="ChiTaRS" id="Rab21">
    <property type="organism name" value="mouse"/>
</dbReference>
<dbReference type="PRO" id="PR:P35282"/>
<dbReference type="Proteomes" id="UP000000589">
    <property type="component" value="Chromosome 10"/>
</dbReference>
<dbReference type="RNAct" id="P35282">
    <property type="molecule type" value="protein"/>
</dbReference>
<dbReference type="Bgee" id="ENSMUSG00000020132">
    <property type="expression patterns" value="Expressed in aortic valve and 261 other cell types or tissues"/>
</dbReference>
<dbReference type="ExpressionAtlas" id="P35282">
    <property type="expression patterns" value="baseline and differential"/>
</dbReference>
<dbReference type="GO" id="GO:1904115">
    <property type="term" value="C:axon cytoplasm"/>
    <property type="evidence" value="ECO:0007669"/>
    <property type="project" value="GOC"/>
</dbReference>
<dbReference type="GO" id="GO:0032154">
    <property type="term" value="C:cleavage furrow"/>
    <property type="evidence" value="ECO:0007669"/>
    <property type="project" value="UniProtKB-SubCell"/>
</dbReference>
<dbReference type="GO" id="GO:0098559">
    <property type="term" value="C:cytoplasmic side of early endosome membrane"/>
    <property type="evidence" value="ECO:0007669"/>
    <property type="project" value="Ensembl"/>
</dbReference>
<dbReference type="GO" id="GO:0009898">
    <property type="term" value="C:cytoplasmic side of plasma membrane"/>
    <property type="evidence" value="ECO:0007669"/>
    <property type="project" value="Ensembl"/>
</dbReference>
<dbReference type="GO" id="GO:0005789">
    <property type="term" value="C:endoplasmic reticulum membrane"/>
    <property type="evidence" value="ECO:0007669"/>
    <property type="project" value="UniProtKB-SubCell"/>
</dbReference>
<dbReference type="GO" id="GO:0032580">
    <property type="term" value="C:Golgi cisterna membrane"/>
    <property type="evidence" value="ECO:0007669"/>
    <property type="project" value="Ensembl"/>
</dbReference>
<dbReference type="GO" id="GO:0000139">
    <property type="term" value="C:Golgi membrane"/>
    <property type="evidence" value="ECO:0007669"/>
    <property type="project" value="UniProtKB-SubCell"/>
</dbReference>
<dbReference type="GO" id="GO:0043005">
    <property type="term" value="C:neuron projection"/>
    <property type="evidence" value="ECO:0000314"/>
    <property type="project" value="UniProtKB"/>
</dbReference>
<dbReference type="GO" id="GO:0045202">
    <property type="term" value="C:synapse"/>
    <property type="evidence" value="ECO:0007669"/>
    <property type="project" value="Ensembl"/>
</dbReference>
<dbReference type="GO" id="GO:0005802">
    <property type="term" value="C:trans-Golgi network"/>
    <property type="evidence" value="ECO:0007669"/>
    <property type="project" value="Ensembl"/>
</dbReference>
<dbReference type="GO" id="GO:0019003">
    <property type="term" value="F:GDP binding"/>
    <property type="evidence" value="ECO:0000250"/>
    <property type="project" value="UniProtKB"/>
</dbReference>
<dbReference type="GO" id="GO:0005525">
    <property type="term" value="F:GTP binding"/>
    <property type="evidence" value="ECO:0000250"/>
    <property type="project" value="UniProtKB"/>
</dbReference>
<dbReference type="GO" id="GO:0003924">
    <property type="term" value="F:GTPase activity"/>
    <property type="evidence" value="ECO:0000250"/>
    <property type="project" value="UniProtKB"/>
</dbReference>
<dbReference type="GO" id="GO:0008089">
    <property type="term" value="P:anterograde axonal transport"/>
    <property type="evidence" value="ECO:0007669"/>
    <property type="project" value="Ensembl"/>
</dbReference>
<dbReference type="GO" id="GO:0050775">
    <property type="term" value="P:positive regulation of dendrite morphogenesis"/>
    <property type="evidence" value="ECO:0000315"/>
    <property type="project" value="UniProtKB"/>
</dbReference>
<dbReference type="GO" id="GO:2000643">
    <property type="term" value="P:positive regulation of early endosome to late endosome transport"/>
    <property type="evidence" value="ECO:0007669"/>
    <property type="project" value="Ensembl"/>
</dbReference>
<dbReference type="GO" id="GO:0048260">
    <property type="term" value="P:positive regulation of receptor-mediated endocytosis"/>
    <property type="evidence" value="ECO:0007669"/>
    <property type="project" value="Ensembl"/>
</dbReference>
<dbReference type="GO" id="GO:0050821">
    <property type="term" value="P:protein stabilization"/>
    <property type="evidence" value="ECO:0000250"/>
    <property type="project" value="UniProtKB"/>
</dbReference>
<dbReference type="GO" id="GO:0015031">
    <property type="term" value="P:protein transport"/>
    <property type="evidence" value="ECO:0007669"/>
    <property type="project" value="UniProtKB-KW"/>
</dbReference>
<dbReference type="GO" id="GO:0032482">
    <property type="term" value="P:Rab protein signal transduction"/>
    <property type="evidence" value="ECO:0007669"/>
    <property type="project" value="InterPro"/>
</dbReference>
<dbReference type="GO" id="GO:0030516">
    <property type="term" value="P:regulation of axon extension"/>
    <property type="evidence" value="ECO:0007669"/>
    <property type="project" value="Ensembl"/>
</dbReference>
<dbReference type="GO" id="GO:0017157">
    <property type="term" value="P:regulation of exocytosis"/>
    <property type="evidence" value="ECO:0007669"/>
    <property type="project" value="Ensembl"/>
</dbReference>
<dbReference type="CDD" id="cd04123">
    <property type="entry name" value="Rab21"/>
    <property type="match status" value="1"/>
</dbReference>
<dbReference type="FunFam" id="3.40.50.300:FF:000550">
    <property type="entry name" value="ras-related protein Rab-21"/>
    <property type="match status" value="1"/>
</dbReference>
<dbReference type="Gene3D" id="3.40.50.300">
    <property type="entry name" value="P-loop containing nucleotide triphosphate hydrolases"/>
    <property type="match status" value="1"/>
</dbReference>
<dbReference type="InterPro" id="IPR027417">
    <property type="entry name" value="P-loop_NTPase"/>
</dbReference>
<dbReference type="InterPro" id="IPR041833">
    <property type="entry name" value="Rab21"/>
</dbReference>
<dbReference type="InterPro" id="IPR005225">
    <property type="entry name" value="Small_GTP-bd"/>
</dbReference>
<dbReference type="InterPro" id="IPR001806">
    <property type="entry name" value="Small_GTPase"/>
</dbReference>
<dbReference type="NCBIfam" id="TIGR00231">
    <property type="entry name" value="small_GTP"/>
    <property type="match status" value="1"/>
</dbReference>
<dbReference type="PANTHER" id="PTHR47978">
    <property type="match status" value="1"/>
</dbReference>
<dbReference type="Pfam" id="PF00071">
    <property type="entry name" value="Ras"/>
    <property type="match status" value="1"/>
</dbReference>
<dbReference type="PRINTS" id="PR00449">
    <property type="entry name" value="RASTRNSFRMNG"/>
</dbReference>
<dbReference type="SMART" id="SM00175">
    <property type="entry name" value="RAB"/>
    <property type="match status" value="1"/>
</dbReference>
<dbReference type="SMART" id="SM00176">
    <property type="entry name" value="RAN"/>
    <property type="match status" value="1"/>
</dbReference>
<dbReference type="SMART" id="SM00173">
    <property type="entry name" value="RAS"/>
    <property type="match status" value="1"/>
</dbReference>
<dbReference type="SMART" id="SM00174">
    <property type="entry name" value="RHO"/>
    <property type="match status" value="1"/>
</dbReference>
<dbReference type="SUPFAM" id="SSF52540">
    <property type="entry name" value="P-loop containing nucleoside triphosphate hydrolases"/>
    <property type="match status" value="1"/>
</dbReference>
<dbReference type="PROSITE" id="PS51419">
    <property type="entry name" value="RAB"/>
    <property type="match status" value="1"/>
</dbReference>
<feature type="initiator methionine" description="Removed" evidence="4">
    <location>
        <position position="1"/>
    </location>
</feature>
<feature type="chain" id="PRO_0000121206" description="Ras-related protein Rab-21">
    <location>
        <begin position="2"/>
        <end position="219"/>
    </location>
</feature>
<feature type="propeptide" id="PRO_0000370769" description="Removed in mature form" evidence="5">
    <location>
        <begin position="220"/>
        <end position="222"/>
    </location>
</feature>
<feature type="short sequence motif" description="Switch 1" evidence="4">
    <location>
        <begin position="41"/>
        <end position="54"/>
    </location>
</feature>
<feature type="short sequence motif" description="Switch 2" evidence="4">
    <location>
        <begin position="74"/>
        <end position="92"/>
    </location>
</feature>
<feature type="binding site" evidence="4">
    <location>
        <position position="26"/>
    </location>
    <ligand>
        <name>GTP</name>
        <dbReference type="ChEBI" id="CHEBI:37565"/>
    </ligand>
</feature>
<feature type="binding site" evidence="4">
    <location>
        <position position="29"/>
    </location>
    <ligand>
        <name>GTP</name>
        <dbReference type="ChEBI" id="CHEBI:37565"/>
    </ligand>
</feature>
<feature type="binding site" evidence="4">
    <location>
        <position position="30"/>
    </location>
    <ligand>
        <name>GTP</name>
        <dbReference type="ChEBI" id="CHEBI:37565"/>
    </ligand>
</feature>
<feature type="binding site" evidence="4">
    <location>
        <position position="31"/>
    </location>
    <ligand>
        <name>GTP</name>
        <dbReference type="ChEBI" id="CHEBI:37565"/>
    </ligand>
</feature>
<feature type="binding site" evidence="4">
    <location>
        <position position="31"/>
    </location>
    <ligand>
        <name>Mg(2+)</name>
        <dbReference type="ChEBI" id="CHEBI:18420"/>
    </ligand>
</feature>
<feature type="binding site" evidence="4">
    <location>
        <position position="32"/>
    </location>
    <ligand>
        <name>GTP</name>
        <dbReference type="ChEBI" id="CHEBI:37565"/>
    </ligand>
</feature>
<feature type="binding site" evidence="4">
    <location>
        <position position="43"/>
    </location>
    <ligand>
        <name>GTP</name>
        <dbReference type="ChEBI" id="CHEBI:37565"/>
    </ligand>
</feature>
<feature type="binding site" evidence="4">
    <location>
        <position position="44"/>
    </location>
    <ligand>
        <name>GTP</name>
        <dbReference type="ChEBI" id="CHEBI:37565"/>
    </ligand>
</feature>
<feature type="binding site" evidence="4">
    <location>
        <position position="46"/>
    </location>
    <ligand>
        <name>GTP</name>
        <dbReference type="ChEBI" id="CHEBI:37565"/>
    </ligand>
</feature>
<feature type="binding site" evidence="4">
    <location>
        <position position="48"/>
    </location>
    <ligand>
        <name>GTP</name>
        <dbReference type="ChEBI" id="CHEBI:37565"/>
    </ligand>
</feature>
<feature type="binding site" evidence="4">
    <location>
        <position position="49"/>
    </location>
    <ligand>
        <name>GTP</name>
        <dbReference type="ChEBI" id="CHEBI:37565"/>
    </ligand>
</feature>
<feature type="binding site" evidence="4">
    <location>
        <position position="49"/>
    </location>
    <ligand>
        <name>Mg(2+)</name>
        <dbReference type="ChEBI" id="CHEBI:18420"/>
    </ligand>
</feature>
<feature type="binding site" evidence="4">
    <location>
        <position position="72"/>
    </location>
    <ligand>
        <name>Mg(2+)</name>
        <dbReference type="ChEBI" id="CHEBI:18420"/>
    </ligand>
</feature>
<feature type="binding site" evidence="4">
    <location>
        <position position="75"/>
    </location>
    <ligand>
        <name>GTP</name>
        <dbReference type="ChEBI" id="CHEBI:37565"/>
    </ligand>
</feature>
<feature type="binding site" evidence="4">
    <location>
        <position position="130"/>
    </location>
    <ligand>
        <name>GTP</name>
        <dbReference type="ChEBI" id="CHEBI:37565"/>
    </ligand>
</feature>
<feature type="binding site" evidence="4">
    <location>
        <position position="131"/>
    </location>
    <ligand>
        <name>GTP</name>
        <dbReference type="ChEBI" id="CHEBI:37565"/>
    </ligand>
</feature>
<feature type="binding site" evidence="4">
    <location>
        <position position="133"/>
    </location>
    <ligand>
        <name>GTP</name>
        <dbReference type="ChEBI" id="CHEBI:37565"/>
    </ligand>
</feature>
<feature type="binding site" evidence="4">
    <location>
        <position position="161"/>
    </location>
    <ligand>
        <name>GTP</name>
        <dbReference type="ChEBI" id="CHEBI:37565"/>
    </ligand>
</feature>
<feature type="binding site" evidence="4">
    <location>
        <position position="162"/>
    </location>
    <ligand>
        <name>GTP</name>
        <dbReference type="ChEBI" id="CHEBI:37565"/>
    </ligand>
</feature>
<feature type="modified residue" description="N-acetylalanine" evidence="4">
    <location>
        <position position="2"/>
    </location>
</feature>
<feature type="modified residue" description="Cysteine methyl ester" evidence="5">
    <location>
        <position position="219"/>
    </location>
</feature>
<feature type="lipid moiety-binding region" description="S-geranylgeranyl cysteine" evidence="1">
    <location>
        <position position="218"/>
    </location>
</feature>
<feature type="lipid moiety-binding region" description="S-geranylgeranyl cysteine" evidence="1">
    <location>
        <position position="219"/>
    </location>
</feature>
<feature type="mutagenesis site" description="Defects in GTP-binding. Decrease in integrin-binding." evidence="6">
    <original>T</original>
    <variation>N</variation>
    <location>
        <position position="31"/>
    </location>
</feature>
<feature type="mutagenesis site" description="Defects in GTP hydrolysis. Increase in integrin-binding." evidence="6">
    <original>Q</original>
    <variation>L</variation>
    <location>
        <position position="76"/>
    </location>
</feature>
<organism>
    <name type="scientific">Mus musculus</name>
    <name type="common">Mouse</name>
    <dbReference type="NCBI Taxonomy" id="10090"/>
    <lineage>
        <taxon>Eukaryota</taxon>
        <taxon>Metazoa</taxon>
        <taxon>Chordata</taxon>
        <taxon>Craniata</taxon>
        <taxon>Vertebrata</taxon>
        <taxon>Euteleostomi</taxon>
        <taxon>Mammalia</taxon>
        <taxon>Eutheria</taxon>
        <taxon>Euarchontoglires</taxon>
        <taxon>Glires</taxon>
        <taxon>Rodentia</taxon>
        <taxon>Myomorpha</taxon>
        <taxon>Muroidea</taxon>
        <taxon>Muridae</taxon>
        <taxon>Murinae</taxon>
        <taxon>Mus</taxon>
        <taxon>Mus</taxon>
    </lineage>
</organism>